<protein>
    <recommendedName>
        <fullName evidence="1">Dual-specificity RNA methyltransferase RlmN</fullName>
        <ecNumber evidence="1">2.1.1.192</ecNumber>
    </recommendedName>
    <alternativeName>
        <fullName evidence="1">23S rRNA (adenine(2503)-C(2))-methyltransferase</fullName>
    </alternativeName>
    <alternativeName>
        <fullName evidence="1">23S rRNA m2A2503 methyltransferase</fullName>
    </alternativeName>
    <alternativeName>
        <fullName evidence="1">Ribosomal RNA large subunit methyltransferase N</fullName>
    </alternativeName>
    <alternativeName>
        <fullName evidence="1">tRNA (adenine(37)-C(2))-methyltransferase</fullName>
    </alternativeName>
    <alternativeName>
        <fullName evidence="1">tRNA m2A37 methyltransferase</fullName>
    </alternativeName>
</protein>
<gene>
    <name evidence="1" type="primary">rlmN</name>
    <name type="ordered locus">RSKD131_2781</name>
</gene>
<proteinExistence type="inferred from homology"/>
<evidence type="ECO:0000255" key="1">
    <source>
        <dbReference type="HAMAP-Rule" id="MF_01849"/>
    </source>
</evidence>
<evidence type="ECO:0000255" key="2">
    <source>
        <dbReference type="PROSITE-ProRule" id="PRU01266"/>
    </source>
</evidence>
<organism>
    <name type="scientific">Cereibacter sphaeroides (strain KD131 / KCTC 12085)</name>
    <name type="common">Rhodobacter sphaeroides</name>
    <dbReference type="NCBI Taxonomy" id="557760"/>
    <lineage>
        <taxon>Bacteria</taxon>
        <taxon>Pseudomonadati</taxon>
        <taxon>Pseudomonadota</taxon>
        <taxon>Alphaproteobacteria</taxon>
        <taxon>Rhodobacterales</taxon>
        <taxon>Paracoccaceae</taxon>
        <taxon>Cereibacter</taxon>
    </lineage>
</organism>
<accession>B9KQP1</accession>
<feature type="chain" id="PRO_1000188596" description="Dual-specificity RNA methyltransferase RlmN">
    <location>
        <begin position="1"/>
        <end position="392"/>
    </location>
</feature>
<feature type="domain" description="Radical SAM core" evidence="2">
    <location>
        <begin position="122"/>
        <end position="364"/>
    </location>
</feature>
<feature type="active site" description="Proton acceptor" evidence="1">
    <location>
        <position position="116"/>
    </location>
</feature>
<feature type="active site" description="S-methylcysteine intermediate" evidence="1">
    <location>
        <position position="369"/>
    </location>
</feature>
<feature type="binding site" evidence="1">
    <location>
        <position position="136"/>
    </location>
    <ligand>
        <name>[4Fe-4S] cluster</name>
        <dbReference type="ChEBI" id="CHEBI:49883"/>
        <note>4Fe-4S-S-AdoMet</note>
    </ligand>
</feature>
<feature type="binding site" evidence="1">
    <location>
        <position position="140"/>
    </location>
    <ligand>
        <name>[4Fe-4S] cluster</name>
        <dbReference type="ChEBI" id="CHEBI:49883"/>
        <note>4Fe-4S-S-AdoMet</note>
    </ligand>
</feature>
<feature type="binding site" evidence="1">
    <location>
        <position position="143"/>
    </location>
    <ligand>
        <name>[4Fe-4S] cluster</name>
        <dbReference type="ChEBI" id="CHEBI:49883"/>
        <note>4Fe-4S-S-AdoMet</note>
    </ligand>
</feature>
<feature type="binding site" evidence="1">
    <location>
        <begin position="195"/>
        <end position="196"/>
    </location>
    <ligand>
        <name>S-adenosyl-L-methionine</name>
        <dbReference type="ChEBI" id="CHEBI:59789"/>
    </ligand>
</feature>
<feature type="binding site" evidence="1">
    <location>
        <position position="227"/>
    </location>
    <ligand>
        <name>S-adenosyl-L-methionine</name>
        <dbReference type="ChEBI" id="CHEBI:59789"/>
    </ligand>
</feature>
<feature type="binding site" evidence="1">
    <location>
        <begin position="249"/>
        <end position="251"/>
    </location>
    <ligand>
        <name>S-adenosyl-L-methionine</name>
        <dbReference type="ChEBI" id="CHEBI:59789"/>
    </ligand>
</feature>
<feature type="binding site" evidence="1">
    <location>
        <position position="326"/>
    </location>
    <ligand>
        <name>S-adenosyl-L-methionine</name>
        <dbReference type="ChEBI" id="CHEBI:59789"/>
    </ligand>
</feature>
<feature type="disulfide bond" description="(transient)" evidence="1">
    <location>
        <begin position="129"/>
        <end position="369"/>
    </location>
</feature>
<name>RLMN_CERSK</name>
<reference key="1">
    <citation type="journal article" date="2009" name="J. Bacteriol.">
        <title>Complete genome sequence of Rhodobacter sphaeroides KD131.</title>
        <authorList>
            <person name="Lim S.-K."/>
            <person name="Kim S.J."/>
            <person name="Cha S.H."/>
            <person name="Oh Y.-K."/>
            <person name="Rhee H.-J."/>
            <person name="Kim M.-S."/>
            <person name="Lee J.K."/>
        </authorList>
    </citation>
    <scope>NUCLEOTIDE SEQUENCE [LARGE SCALE GENOMIC DNA]</scope>
    <source>
        <strain>KD131 / KCTC 12085</strain>
    </source>
</reference>
<sequence>MTANAPITQDVMTLPRKLPEGGPVNIVGLTREELLAALVAAGTPERQAKMRAGQVWQWVYHWGVRDFAQMTNLAKDYRALLAEHFAIVLPEVVTRQISADGTRKYLIRIAGGHEVETVYIPEEGRGTLCVSSQVGCTLTCSFCHTGTQKLVRNLTAAEIVGQLMLVRDDLGEWPERGAPKDETRLVSNLVLMGMGEPLYNFENVRNAMKVVMDGEGLSLSRRRITLSTSGVVPEIARTAEEIGCQLAISFHATTDEVRDILVPINKRWNIRTLLDSLRDYPRLSNSERITFEYVMLDGVNDTDADARRLVKLISGIPSKINLIPFNEWPGAPYRRSTPERIAAFADIIYKAGYASPIRTPRGEDIMAACGQLKSATERARKSRAQIAAETGL</sequence>
<comment type="function">
    <text evidence="1">Specifically methylates position 2 of adenine 2503 in 23S rRNA and position 2 of adenine 37 in tRNAs. m2A2503 modification seems to play a crucial role in the proofreading step occurring at the peptidyl transferase center and thus would serve to optimize ribosomal fidelity.</text>
</comment>
<comment type="catalytic activity">
    <reaction evidence="1">
        <text>adenosine(2503) in 23S rRNA + 2 reduced [2Fe-2S]-[ferredoxin] + 2 S-adenosyl-L-methionine = 2-methyladenosine(2503) in 23S rRNA + 5'-deoxyadenosine + L-methionine + 2 oxidized [2Fe-2S]-[ferredoxin] + S-adenosyl-L-homocysteine</text>
        <dbReference type="Rhea" id="RHEA:42916"/>
        <dbReference type="Rhea" id="RHEA-COMP:10000"/>
        <dbReference type="Rhea" id="RHEA-COMP:10001"/>
        <dbReference type="Rhea" id="RHEA-COMP:10152"/>
        <dbReference type="Rhea" id="RHEA-COMP:10282"/>
        <dbReference type="ChEBI" id="CHEBI:17319"/>
        <dbReference type="ChEBI" id="CHEBI:33737"/>
        <dbReference type="ChEBI" id="CHEBI:33738"/>
        <dbReference type="ChEBI" id="CHEBI:57844"/>
        <dbReference type="ChEBI" id="CHEBI:57856"/>
        <dbReference type="ChEBI" id="CHEBI:59789"/>
        <dbReference type="ChEBI" id="CHEBI:74411"/>
        <dbReference type="ChEBI" id="CHEBI:74497"/>
        <dbReference type="EC" id="2.1.1.192"/>
    </reaction>
</comment>
<comment type="catalytic activity">
    <reaction evidence="1">
        <text>adenosine(37) in tRNA + 2 reduced [2Fe-2S]-[ferredoxin] + 2 S-adenosyl-L-methionine = 2-methyladenosine(37) in tRNA + 5'-deoxyadenosine + L-methionine + 2 oxidized [2Fe-2S]-[ferredoxin] + S-adenosyl-L-homocysteine</text>
        <dbReference type="Rhea" id="RHEA:43332"/>
        <dbReference type="Rhea" id="RHEA-COMP:10000"/>
        <dbReference type="Rhea" id="RHEA-COMP:10001"/>
        <dbReference type="Rhea" id="RHEA-COMP:10162"/>
        <dbReference type="Rhea" id="RHEA-COMP:10485"/>
        <dbReference type="ChEBI" id="CHEBI:17319"/>
        <dbReference type="ChEBI" id="CHEBI:33737"/>
        <dbReference type="ChEBI" id="CHEBI:33738"/>
        <dbReference type="ChEBI" id="CHEBI:57844"/>
        <dbReference type="ChEBI" id="CHEBI:57856"/>
        <dbReference type="ChEBI" id="CHEBI:59789"/>
        <dbReference type="ChEBI" id="CHEBI:74411"/>
        <dbReference type="ChEBI" id="CHEBI:74497"/>
        <dbReference type="EC" id="2.1.1.192"/>
    </reaction>
</comment>
<comment type="cofactor">
    <cofactor evidence="1">
        <name>[4Fe-4S] cluster</name>
        <dbReference type="ChEBI" id="CHEBI:49883"/>
    </cofactor>
    <text evidence="1">Binds 1 [4Fe-4S] cluster. The cluster is coordinated with 3 cysteines and an exchangeable S-adenosyl-L-methionine.</text>
</comment>
<comment type="subcellular location">
    <subcellularLocation>
        <location evidence="1">Cytoplasm</location>
    </subcellularLocation>
</comment>
<comment type="miscellaneous">
    <text evidence="1">Reaction proceeds by a ping-pong mechanism involving intermediate methylation of a conserved cysteine residue.</text>
</comment>
<comment type="similarity">
    <text evidence="1">Belongs to the radical SAM superfamily. RlmN family.</text>
</comment>
<keyword id="KW-0004">4Fe-4S</keyword>
<keyword id="KW-0963">Cytoplasm</keyword>
<keyword id="KW-1015">Disulfide bond</keyword>
<keyword id="KW-0408">Iron</keyword>
<keyword id="KW-0411">Iron-sulfur</keyword>
<keyword id="KW-0479">Metal-binding</keyword>
<keyword id="KW-0489">Methyltransferase</keyword>
<keyword id="KW-0698">rRNA processing</keyword>
<keyword id="KW-0949">S-adenosyl-L-methionine</keyword>
<keyword id="KW-0808">Transferase</keyword>
<keyword id="KW-0819">tRNA processing</keyword>
<dbReference type="EC" id="2.1.1.192" evidence="1"/>
<dbReference type="EMBL" id="CP001150">
    <property type="protein sequence ID" value="ACM02641.1"/>
    <property type="molecule type" value="Genomic_DNA"/>
</dbReference>
<dbReference type="RefSeq" id="WP_002721983.1">
    <property type="nucleotide sequence ID" value="NC_011963.1"/>
</dbReference>
<dbReference type="SMR" id="B9KQP1"/>
<dbReference type="GeneID" id="67448152"/>
<dbReference type="KEGG" id="rsk:RSKD131_2781"/>
<dbReference type="HOGENOM" id="CLU_029101_2_0_5"/>
<dbReference type="GO" id="GO:0005737">
    <property type="term" value="C:cytoplasm"/>
    <property type="evidence" value="ECO:0007669"/>
    <property type="project" value="UniProtKB-SubCell"/>
</dbReference>
<dbReference type="GO" id="GO:0051539">
    <property type="term" value="F:4 iron, 4 sulfur cluster binding"/>
    <property type="evidence" value="ECO:0007669"/>
    <property type="project" value="UniProtKB-UniRule"/>
</dbReference>
<dbReference type="GO" id="GO:0046872">
    <property type="term" value="F:metal ion binding"/>
    <property type="evidence" value="ECO:0007669"/>
    <property type="project" value="UniProtKB-KW"/>
</dbReference>
<dbReference type="GO" id="GO:0070040">
    <property type="term" value="F:rRNA (adenine(2503)-C2-)-methyltransferase activity"/>
    <property type="evidence" value="ECO:0007669"/>
    <property type="project" value="UniProtKB-UniRule"/>
</dbReference>
<dbReference type="GO" id="GO:0019843">
    <property type="term" value="F:rRNA binding"/>
    <property type="evidence" value="ECO:0007669"/>
    <property type="project" value="UniProtKB-UniRule"/>
</dbReference>
<dbReference type="GO" id="GO:0002935">
    <property type="term" value="F:tRNA (adenine(37)-C2)-methyltransferase activity"/>
    <property type="evidence" value="ECO:0007669"/>
    <property type="project" value="UniProtKB-UniRule"/>
</dbReference>
<dbReference type="GO" id="GO:0000049">
    <property type="term" value="F:tRNA binding"/>
    <property type="evidence" value="ECO:0007669"/>
    <property type="project" value="UniProtKB-UniRule"/>
</dbReference>
<dbReference type="GO" id="GO:0070475">
    <property type="term" value="P:rRNA base methylation"/>
    <property type="evidence" value="ECO:0007669"/>
    <property type="project" value="UniProtKB-UniRule"/>
</dbReference>
<dbReference type="GO" id="GO:0030488">
    <property type="term" value="P:tRNA methylation"/>
    <property type="evidence" value="ECO:0007669"/>
    <property type="project" value="UniProtKB-UniRule"/>
</dbReference>
<dbReference type="CDD" id="cd01335">
    <property type="entry name" value="Radical_SAM"/>
    <property type="match status" value="1"/>
</dbReference>
<dbReference type="FunFam" id="3.20.20.70:FF:000008">
    <property type="entry name" value="Dual-specificity RNA methyltransferase RlmN"/>
    <property type="match status" value="1"/>
</dbReference>
<dbReference type="Gene3D" id="1.10.150.530">
    <property type="match status" value="1"/>
</dbReference>
<dbReference type="Gene3D" id="3.20.20.70">
    <property type="entry name" value="Aldolase class I"/>
    <property type="match status" value="1"/>
</dbReference>
<dbReference type="HAMAP" id="MF_01849">
    <property type="entry name" value="RNA_methyltr_RlmN"/>
    <property type="match status" value="1"/>
</dbReference>
<dbReference type="InterPro" id="IPR013785">
    <property type="entry name" value="Aldolase_TIM"/>
</dbReference>
<dbReference type="InterPro" id="IPR040072">
    <property type="entry name" value="Methyltransferase_A"/>
</dbReference>
<dbReference type="InterPro" id="IPR048641">
    <property type="entry name" value="RlmN_N"/>
</dbReference>
<dbReference type="InterPro" id="IPR027492">
    <property type="entry name" value="RNA_MTrfase_RlmN"/>
</dbReference>
<dbReference type="InterPro" id="IPR004383">
    <property type="entry name" value="rRNA_lsu_MTrfase_RlmN/Cfr"/>
</dbReference>
<dbReference type="InterPro" id="IPR007197">
    <property type="entry name" value="rSAM"/>
</dbReference>
<dbReference type="NCBIfam" id="TIGR00048">
    <property type="entry name" value="rRNA_mod_RlmN"/>
    <property type="match status" value="1"/>
</dbReference>
<dbReference type="PANTHER" id="PTHR30544">
    <property type="entry name" value="23S RRNA METHYLTRANSFERASE"/>
    <property type="match status" value="1"/>
</dbReference>
<dbReference type="PANTHER" id="PTHR30544:SF5">
    <property type="entry name" value="RADICAL SAM CORE DOMAIN-CONTAINING PROTEIN"/>
    <property type="match status" value="1"/>
</dbReference>
<dbReference type="Pfam" id="PF04055">
    <property type="entry name" value="Radical_SAM"/>
    <property type="match status" value="1"/>
</dbReference>
<dbReference type="Pfam" id="PF21016">
    <property type="entry name" value="RlmN_N"/>
    <property type="match status" value="1"/>
</dbReference>
<dbReference type="PIRSF" id="PIRSF006004">
    <property type="entry name" value="CHP00048"/>
    <property type="match status" value="1"/>
</dbReference>
<dbReference type="SFLD" id="SFLDF00275">
    <property type="entry name" value="adenosine_C2_methyltransferase"/>
    <property type="match status" value="1"/>
</dbReference>
<dbReference type="SFLD" id="SFLDG01062">
    <property type="entry name" value="methyltransferase_(Class_A)"/>
    <property type="match status" value="1"/>
</dbReference>
<dbReference type="SUPFAM" id="SSF102114">
    <property type="entry name" value="Radical SAM enzymes"/>
    <property type="match status" value="1"/>
</dbReference>
<dbReference type="PROSITE" id="PS51918">
    <property type="entry name" value="RADICAL_SAM"/>
    <property type="match status" value="1"/>
</dbReference>